<reference key="1">
    <citation type="submission" date="2007-05" db="EMBL/GenBank/DDBJ databases">
        <title>Complete sequence of Dehalococcoides sp. BAV1.</title>
        <authorList>
            <consortium name="US DOE Joint Genome Institute"/>
            <person name="Copeland A."/>
            <person name="Lucas S."/>
            <person name="Lapidus A."/>
            <person name="Barry K."/>
            <person name="Detter J.C."/>
            <person name="Glavina del Rio T."/>
            <person name="Hammon N."/>
            <person name="Israni S."/>
            <person name="Pitluck S."/>
            <person name="Lowry S."/>
            <person name="Clum A."/>
            <person name="Schmutz J."/>
            <person name="Larimer F."/>
            <person name="Land M."/>
            <person name="Hauser L."/>
            <person name="Kyrpides N."/>
            <person name="Kim E."/>
            <person name="Ritalahti K.M."/>
            <person name="Loeffler F."/>
            <person name="Richardson P."/>
        </authorList>
    </citation>
    <scope>NUCLEOTIDE SEQUENCE [LARGE SCALE GENOMIC DNA]</scope>
    <source>
        <strain>ATCC BAA-2100 / JCM 16839 / KCTC 5957 / BAV1</strain>
    </source>
</reference>
<dbReference type="EC" id="6.1.1.3" evidence="1"/>
<dbReference type="EMBL" id="CP000688">
    <property type="protein sequence ID" value="ABQ17265.1"/>
    <property type="molecule type" value="Genomic_DNA"/>
</dbReference>
<dbReference type="SMR" id="A5FRB3"/>
<dbReference type="KEGG" id="deb:DehaBAV1_0681"/>
<dbReference type="PATRIC" id="fig|216389.18.peg.730"/>
<dbReference type="HOGENOM" id="CLU_008554_0_1_0"/>
<dbReference type="GO" id="GO:0005737">
    <property type="term" value="C:cytoplasm"/>
    <property type="evidence" value="ECO:0007669"/>
    <property type="project" value="UniProtKB-SubCell"/>
</dbReference>
<dbReference type="GO" id="GO:0005524">
    <property type="term" value="F:ATP binding"/>
    <property type="evidence" value="ECO:0007669"/>
    <property type="project" value="UniProtKB-UniRule"/>
</dbReference>
<dbReference type="GO" id="GO:0046872">
    <property type="term" value="F:metal ion binding"/>
    <property type="evidence" value="ECO:0007669"/>
    <property type="project" value="UniProtKB-KW"/>
</dbReference>
<dbReference type="GO" id="GO:0004829">
    <property type="term" value="F:threonine-tRNA ligase activity"/>
    <property type="evidence" value="ECO:0007669"/>
    <property type="project" value="UniProtKB-UniRule"/>
</dbReference>
<dbReference type="GO" id="GO:0000049">
    <property type="term" value="F:tRNA binding"/>
    <property type="evidence" value="ECO:0007669"/>
    <property type="project" value="UniProtKB-KW"/>
</dbReference>
<dbReference type="GO" id="GO:0006435">
    <property type="term" value="P:threonyl-tRNA aminoacylation"/>
    <property type="evidence" value="ECO:0007669"/>
    <property type="project" value="UniProtKB-UniRule"/>
</dbReference>
<dbReference type="CDD" id="cd00860">
    <property type="entry name" value="ThrRS_anticodon"/>
    <property type="match status" value="1"/>
</dbReference>
<dbReference type="CDD" id="cd00771">
    <property type="entry name" value="ThrRS_core"/>
    <property type="match status" value="1"/>
</dbReference>
<dbReference type="FunFam" id="3.30.54.20:FF:000002">
    <property type="entry name" value="Threonine--tRNA ligase"/>
    <property type="match status" value="1"/>
</dbReference>
<dbReference type="FunFam" id="3.30.930.10:FF:000002">
    <property type="entry name" value="Threonine--tRNA ligase"/>
    <property type="match status" value="1"/>
</dbReference>
<dbReference type="FunFam" id="3.40.50.800:FF:000001">
    <property type="entry name" value="Threonine--tRNA ligase"/>
    <property type="match status" value="1"/>
</dbReference>
<dbReference type="FunFam" id="3.30.980.10:FF:000005">
    <property type="entry name" value="Threonyl-tRNA synthetase, mitochondrial"/>
    <property type="match status" value="1"/>
</dbReference>
<dbReference type="Gene3D" id="3.30.54.20">
    <property type="match status" value="1"/>
</dbReference>
<dbReference type="Gene3D" id="3.40.50.800">
    <property type="entry name" value="Anticodon-binding domain"/>
    <property type="match status" value="1"/>
</dbReference>
<dbReference type="Gene3D" id="3.30.930.10">
    <property type="entry name" value="Bira Bifunctional Protein, Domain 2"/>
    <property type="match status" value="1"/>
</dbReference>
<dbReference type="Gene3D" id="3.30.980.10">
    <property type="entry name" value="Threonyl-trna Synthetase, Chain A, domain 2"/>
    <property type="match status" value="1"/>
</dbReference>
<dbReference type="HAMAP" id="MF_00184">
    <property type="entry name" value="Thr_tRNA_synth"/>
    <property type="match status" value="1"/>
</dbReference>
<dbReference type="InterPro" id="IPR002314">
    <property type="entry name" value="aa-tRNA-synt_IIb"/>
</dbReference>
<dbReference type="InterPro" id="IPR006195">
    <property type="entry name" value="aa-tRNA-synth_II"/>
</dbReference>
<dbReference type="InterPro" id="IPR045864">
    <property type="entry name" value="aa-tRNA-synth_II/BPL/LPL"/>
</dbReference>
<dbReference type="InterPro" id="IPR004154">
    <property type="entry name" value="Anticodon-bd"/>
</dbReference>
<dbReference type="InterPro" id="IPR036621">
    <property type="entry name" value="Anticodon-bd_dom_sf"/>
</dbReference>
<dbReference type="InterPro" id="IPR002320">
    <property type="entry name" value="Thr-tRNA-ligase_IIa"/>
</dbReference>
<dbReference type="InterPro" id="IPR018163">
    <property type="entry name" value="Thr/Ala-tRNA-synth_IIc_edit"/>
</dbReference>
<dbReference type="InterPro" id="IPR047246">
    <property type="entry name" value="ThrRS_anticodon"/>
</dbReference>
<dbReference type="InterPro" id="IPR033728">
    <property type="entry name" value="ThrRS_core"/>
</dbReference>
<dbReference type="InterPro" id="IPR012947">
    <property type="entry name" value="tRNA_SAD"/>
</dbReference>
<dbReference type="NCBIfam" id="TIGR00418">
    <property type="entry name" value="thrS"/>
    <property type="match status" value="1"/>
</dbReference>
<dbReference type="PANTHER" id="PTHR11451:SF44">
    <property type="entry name" value="THREONINE--TRNA LIGASE, CHLOROPLASTIC_MITOCHONDRIAL 2"/>
    <property type="match status" value="1"/>
</dbReference>
<dbReference type="PANTHER" id="PTHR11451">
    <property type="entry name" value="THREONINE-TRNA LIGASE"/>
    <property type="match status" value="1"/>
</dbReference>
<dbReference type="Pfam" id="PF03129">
    <property type="entry name" value="HGTP_anticodon"/>
    <property type="match status" value="1"/>
</dbReference>
<dbReference type="Pfam" id="PF00587">
    <property type="entry name" value="tRNA-synt_2b"/>
    <property type="match status" value="1"/>
</dbReference>
<dbReference type="Pfam" id="PF07973">
    <property type="entry name" value="tRNA_SAD"/>
    <property type="match status" value="1"/>
</dbReference>
<dbReference type="PRINTS" id="PR01047">
    <property type="entry name" value="TRNASYNTHTHR"/>
</dbReference>
<dbReference type="SMART" id="SM00863">
    <property type="entry name" value="tRNA_SAD"/>
    <property type="match status" value="1"/>
</dbReference>
<dbReference type="SUPFAM" id="SSF52954">
    <property type="entry name" value="Class II aaRS ABD-related"/>
    <property type="match status" value="1"/>
</dbReference>
<dbReference type="SUPFAM" id="SSF55681">
    <property type="entry name" value="Class II aaRS and biotin synthetases"/>
    <property type="match status" value="1"/>
</dbReference>
<dbReference type="SUPFAM" id="SSF55186">
    <property type="entry name" value="ThrRS/AlaRS common domain"/>
    <property type="match status" value="1"/>
</dbReference>
<dbReference type="PROSITE" id="PS50862">
    <property type="entry name" value="AA_TRNA_LIGASE_II"/>
    <property type="match status" value="1"/>
</dbReference>
<proteinExistence type="inferred from homology"/>
<comment type="function">
    <text evidence="1">Catalyzes the attachment of threonine to tRNA(Thr) in a two-step reaction: L-threonine is first activated by ATP to form Thr-AMP and then transferred to the acceptor end of tRNA(Thr). Also edits incorrectly charged L-seryl-tRNA(Thr).</text>
</comment>
<comment type="catalytic activity">
    <reaction evidence="1">
        <text>tRNA(Thr) + L-threonine + ATP = L-threonyl-tRNA(Thr) + AMP + diphosphate + H(+)</text>
        <dbReference type="Rhea" id="RHEA:24624"/>
        <dbReference type="Rhea" id="RHEA-COMP:9670"/>
        <dbReference type="Rhea" id="RHEA-COMP:9704"/>
        <dbReference type="ChEBI" id="CHEBI:15378"/>
        <dbReference type="ChEBI" id="CHEBI:30616"/>
        <dbReference type="ChEBI" id="CHEBI:33019"/>
        <dbReference type="ChEBI" id="CHEBI:57926"/>
        <dbReference type="ChEBI" id="CHEBI:78442"/>
        <dbReference type="ChEBI" id="CHEBI:78534"/>
        <dbReference type="ChEBI" id="CHEBI:456215"/>
        <dbReference type="EC" id="6.1.1.3"/>
    </reaction>
</comment>
<comment type="cofactor">
    <cofactor evidence="1">
        <name>Zn(2+)</name>
        <dbReference type="ChEBI" id="CHEBI:29105"/>
    </cofactor>
    <text evidence="1">Binds 1 zinc ion per subunit.</text>
</comment>
<comment type="subunit">
    <text evidence="1">Homodimer.</text>
</comment>
<comment type="subcellular location">
    <subcellularLocation>
        <location evidence="1">Cytoplasm</location>
    </subcellularLocation>
</comment>
<comment type="similarity">
    <text evidence="1">Belongs to the class-II aminoacyl-tRNA synthetase family.</text>
</comment>
<name>SYT_DEHMB</name>
<keyword id="KW-0030">Aminoacyl-tRNA synthetase</keyword>
<keyword id="KW-0067">ATP-binding</keyword>
<keyword id="KW-0963">Cytoplasm</keyword>
<keyword id="KW-0436">Ligase</keyword>
<keyword id="KW-0479">Metal-binding</keyword>
<keyword id="KW-0547">Nucleotide-binding</keyword>
<keyword id="KW-0648">Protein biosynthesis</keyword>
<keyword id="KW-0694">RNA-binding</keyword>
<keyword id="KW-0820">tRNA-binding</keyword>
<keyword id="KW-0862">Zinc</keyword>
<organism>
    <name type="scientific">Dehalococcoides mccartyi (strain ATCC BAA-2100 / JCM 16839 / KCTC 5957 / BAV1)</name>
    <dbReference type="NCBI Taxonomy" id="216389"/>
    <lineage>
        <taxon>Bacteria</taxon>
        <taxon>Bacillati</taxon>
        <taxon>Chloroflexota</taxon>
        <taxon>Dehalococcoidia</taxon>
        <taxon>Dehalococcoidales</taxon>
        <taxon>Dehalococcoidaceae</taxon>
        <taxon>Dehalococcoides</taxon>
    </lineage>
</organism>
<accession>A5FRB3</accession>
<sequence length="582" mass="67003">MANQIDESKPISDLEIMRHSAAHIMAEAVLSMFPEAKLGIGPAIDTGFYYDFDLPRTLTPEDLPEIETRMNQLVKSNLPFRREEMSKDEARKLFANQPYKLELLNDITDETVSIYRQGNFCDLCRGPHVNYTSKVKAFKLLSIAGAYWRGDEKRPMLQRIYGAAFLDKASLAEYLNMLEEAAKRDHRKLGKELELFSLHQEIGGGLVNWLPNGAIVRHLIEEFWKKEHLKRGYDLVYTPHIAKVDLWKTSGHWGFYRENMYSPMDIDGEEYVLKPMNCVYHILMFKNRTRSYKELPIRMAELGTVYRYERSGVLHGLSRVRGFTQDDAHIFCLYDQLEKEVVKVLDLAKFMIDTFGFTKYKVMLSTRPEKYVGELDKWEYATDILAKALEANQIPYQVDPGEGVFYGPKIDIKFEDALGRAWQGPTIQVDFQLPERFDVSVVGEDGKDQPVAMVHRTVLGSMERFMSCLTEQYGGAFPAWLSPKQAMVIPIADRHTEFAEKLACELREEEVRVEVDSRSETMNQKIRQAQLAKIPYMLVVGDKEIETQSVAVRTRTGSQQVMPFAEFKSMLLAKIKTKSTEI</sequence>
<feature type="chain" id="PRO_1000077354" description="Threonine--tRNA ligase">
    <location>
        <begin position="1"/>
        <end position="582"/>
    </location>
</feature>
<feature type="region of interest" description="Catalytic" evidence="1">
    <location>
        <begin position="185"/>
        <end position="478"/>
    </location>
</feature>
<feature type="binding site" evidence="1">
    <location>
        <position position="278"/>
    </location>
    <ligand>
        <name>Zn(2+)</name>
        <dbReference type="ChEBI" id="CHEBI:29105"/>
    </ligand>
</feature>
<feature type="binding site" evidence="1">
    <location>
        <position position="329"/>
    </location>
    <ligand>
        <name>Zn(2+)</name>
        <dbReference type="ChEBI" id="CHEBI:29105"/>
    </ligand>
</feature>
<feature type="binding site" evidence="1">
    <location>
        <position position="455"/>
    </location>
    <ligand>
        <name>Zn(2+)</name>
        <dbReference type="ChEBI" id="CHEBI:29105"/>
    </ligand>
</feature>
<evidence type="ECO:0000255" key="1">
    <source>
        <dbReference type="HAMAP-Rule" id="MF_00184"/>
    </source>
</evidence>
<gene>
    <name evidence="1" type="primary">thrS</name>
    <name type="ordered locus">DehaBAV1_0681</name>
</gene>
<protein>
    <recommendedName>
        <fullName evidence="1">Threonine--tRNA ligase</fullName>
        <ecNumber evidence="1">6.1.1.3</ecNumber>
    </recommendedName>
    <alternativeName>
        <fullName evidence="1">Threonyl-tRNA synthetase</fullName>
        <shortName evidence="1">ThrRS</shortName>
    </alternativeName>
</protein>